<dbReference type="EMBL" id="D13399">
    <property type="protein sequence ID" value="BAA02663.1"/>
    <property type="molecule type" value="mRNA"/>
</dbReference>
<dbReference type="SMR" id="Q98636"/>
<dbReference type="GO" id="GO:0044172">
    <property type="term" value="C:host cell endoplasmic reticulum-Golgi intermediate compartment"/>
    <property type="evidence" value="ECO:0007669"/>
    <property type="project" value="UniProtKB-SubCell"/>
</dbReference>
<dbReference type="GO" id="GO:0020002">
    <property type="term" value="C:host cell plasma membrane"/>
    <property type="evidence" value="ECO:0007669"/>
    <property type="project" value="UniProtKB-SubCell"/>
</dbReference>
<dbReference type="GO" id="GO:0044168">
    <property type="term" value="C:host cell rough endoplasmic reticulum"/>
    <property type="evidence" value="ECO:0007669"/>
    <property type="project" value="UniProtKB-SubCell"/>
</dbReference>
<dbReference type="GO" id="GO:0044163">
    <property type="term" value="C:host cytoskeleton"/>
    <property type="evidence" value="ECO:0007669"/>
    <property type="project" value="UniProtKB-SubCell"/>
</dbReference>
<dbReference type="GO" id="GO:0016020">
    <property type="term" value="C:membrane"/>
    <property type="evidence" value="ECO:0007669"/>
    <property type="project" value="UniProtKB-KW"/>
</dbReference>
<dbReference type="GO" id="GO:0039624">
    <property type="term" value="C:viral outer capsid"/>
    <property type="evidence" value="ECO:0007669"/>
    <property type="project" value="UniProtKB-UniRule"/>
</dbReference>
<dbReference type="GO" id="GO:0039665">
    <property type="term" value="P:permeabilization of host organelle membrane involved in viral entry into host cell"/>
    <property type="evidence" value="ECO:0007669"/>
    <property type="project" value="UniProtKB-UniRule"/>
</dbReference>
<dbReference type="GO" id="GO:0019062">
    <property type="term" value="P:virion attachment to host cell"/>
    <property type="evidence" value="ECO:0007669"/>
    <property type="project" value="UniProtKB-UniRule"/>
</dbReference>
<dbReference type="Gene3D" id="1.20.5.170">
    <property type="match status" value="1"/>
</dbReference>
<dbReference type="Gene3D" id="2.60.120.200">
    <property type="match status" value="1"/>
</dbReference>
<dbReference type="HAMAP" id="MF_04132">
    <property type="entry name" value="Rota_A_VP4"/>
    <property type="match status" value="1"/>
</dbReference>
<dbReference type="HAMAP" id="MF_04125">
    <property type="entry name" value="Rota_VP4"/>
    <property type="match status" value="1"/>
</dbReference>
<dbReference type="InterPro" id="IPR013320">
    <property type="entry name" value="ConA-like_dom_sf"/>
</dbReference>
<dbReference type="InterPro" id="IPR042546">
    <property type="entry name" value="Rota_A_VP4"/>
</dbReference>
<dbReference type="InterPro" id="IPR035330">
    <property type="entry name" value="Rota_VP4_MID"/>
</dbReference>
<dbReference type="InterPro" id="IPR038017">
    <property type="entry name" value="Rota_VP4_MID_sf"/>
</dbReference>
<dbReference type="InterPro" id="IPR000416">
    <property type="entry name" value="VP4_concanavalin-like"/>
</dbReference>
<dbReference type="InterPro" id="IPR035329">
    <property type="entry name" value="VP4_helical"/>
</dbReference>
<dbReference type="Pfam" id="PF17477">
    <property type="entry name" value="Rota_VP4_MID"/>
    <property type="match status" value="1"/>
</dbReference>
<dbReference type="Pfam" id="PF00426">
    <property type="entry name" value="VP4_haemagglut"/>
    <property type="match status" value="1"/>
</dbReference>
<dbReference type="Pfam" id="PF17478">
    <property type="entry name" value="VP4_helical"/>
    <property type="match status" value="1"/>
</dbReference>
<dbReference type="SUPFAM" id="SSF49899">
    <property type="entry name" value="Concanavalin A-like lectins/glucanases"/>
    <property type="match status" value="1"/>
</dbReference>
<dbReference type="SUPFAM" id="SSF111379">
    <property type="entry name" value="VP4 membrane interaction domain"/>
    <property type="match status" value="1"/>
</dbReference>
<sequence length="776" mass="86780">MASLIYRQLLGNSYAVDLSDETQEIGASRNQNVTVNPGPFAQTNYAPVSWGPGEVRDSTTVEPLLDGPYQPTTFNPPVDYWMLLAPTDRGVVVEGTNNTNRWLAIILVEPDVPTEERTYTLFGQQAQITVANDSQLKWKFIVVSKQTLDGAYAQYGPLLSATKLYAVMKHSGRIYTYSGETPNATTAYYSTTNYDTVNMKAYCHFYIIPRTQESKCTEYINTGLPPIQNTRNVIPVSITSRDIQYTRAQVNEDILISKASLWKEMQYNRDIIIRFQIANSIVKSGGLGYKWSEISFKPANYQYSYIRDDEEVTSATTCSVNGVNEFSYSGGSLPTDFAVSKYEVIKENSFVYVDYWDDSQAFRNMVYVRSLAANLNSVMCTGGDFSFALPVGHYPVMTGGAVTLHSAGVTLSTQFTDFVSLNSLRFRFSLSVEEPPFSIIRTRVSGLYGLPATKPNNSQEYYEIAGRFSLISLVPSNDDYQTPIMNSVTVRQDLERQLSELRDEFNSLSQQIAMSQLIDLALLPLDMFSMFSGIKSTIDAAKSMVTNVMKKFKKSSLANSVSTLTNSLSDAASSVSRSSSIRSIGSTASAWTDVSITASDVSTATNSIATQTSTISKRLRLKEMATQTDGMNFDDISAEMLKTKIDKSTQITADTLPEMITEASEKFIPNRTYRIINNDEVFETSIDGKYFAYRVDTFEEIPFDVQKFADLVTDSPVISAIIDFKTLKKLNDNYGITKEQAFNLLRSDPKVLREFINQNNPIIKNRIENLIMQCRL</sequence>
<feature type="chain" id="PRO_0000368104" description="Outer capsid protein VP4" evidence="1">
    <location>
        <begin position="1"/>
        <end position="776"/>
    </location>
</feature>
<feature type="chain" id="PRO_0000368105" description="Outer capsid protein VP8*" evidence="1">
    <location>
        <begin position="1"/>
        <end position="231"/>
    </location>
</feature>
<feature type="chain" id="PRO_0000368106" description="Outer capsid protein VP5*" evidence="1">
    <location>
        <begin position="248"/>
        <end position="776"/>
    </location>
</feature>
<feature type="region of interest" description="Spike head" evidence="1">
    <location>
        <begin position="65"/>
        <end position="224"/>
    </location>
</feature>
<feature type="region of interest" description="Spike body and stalk (antigen domain)" evidence="1">
    <location>
        <begin position="248"/>
        <end position="479"/>
    </location>
</feature>
<feature type="region of interest" description="Hydrophobic; possible role in virus entry into host cell" evidence="1">
    <location>
        <begin position="389"/>
        <end position="409"/>
    </location>
</feature>
<feature type="region of interest" description="Spike foot" evidence="1">
    <location>
        <begin position="510"/>
        <end position="776"/>
    </location>
</feature>
<feature type="coiled-coil region" evidence="1">
    <location>
        <begin position="484"/>
        <end position="511"/>
    </location>
</feature>
<feature type="short sequence motif" description="YGL motif; interaction with ITGA4" evidence="1">
    <location>
        <begin position="448"/>
        <end position="450"/>
    </location>
</feature>
<feature type="short sequence motif" description="KID motif; interaction with HSPA8" evidence="1">
    <location>
        <begin position="644"/>
        <end position="646"/>
    </location>
</feature>
<feature type="site" description="Binding to sialic acid" evidence="1">
    <location>
        <position position="101"/>
    </location>
</feature>
<feature type="site" description="Binding to sialic acid" evidence="1">
    <location>
        <position position="190"/>
    </location>
</feature>
<feature type="site" description="Cleavage" evidence="1">
    <location>
        <begin position="231"/>
        <end position="232"/>
    </location>
</feature>
<feature type="site" description="Cleavage" evidence="1">
    <location>
        <begin position="241"/>
        <end position="242"/>
    </location>
</feature>
<feature type="site" description="Cleavage; associated with enhancement of infectivity" evidence="1">
    <location>
        <begin position="247"/>
        <end position="248"/>
    </location>
</feature>
<feature type="disulfide bond" evidence="1">
    <location>
        <begin position="203"/>
        <end position="216"/>
    </location>
</feature>
<feature type="disulfide bond" evidence="1">
    <location>
        <begin position="318"/>
        <end position="380"/>
    </location>
</feature>
<name>VP4_ROTEL</name>
<accession>Q98636</accession>
<accession>Q86178</accession>
<proteinExistence type="evidence at transcript level"/>
<organism>
    <name type="scientific">Rotavirus A (isolate RVA/Equine/United Kingdom/L338/1988/G13P12[18])</name>
    <name type="common">RV-A</name>
    <dbReference type="NCBI Taxonomy" id="36441"/>
    <lineage>
        <taxon>Viruses</taxon>
        <taxon>Riboviria</taxon>
        <taxon>Orthornavirae</taxon>
        <taxon>Duplornaviricota</taxon>
        <taxon>Resentoviricetes</taxon>
        <taxon>Reovirales</taxon>
        <taxon>Sedoreoviridae</taxon>
        <taxon>Rotavirus</taxon>
        <taxon>Rotavirus A</taxon>
    </lineage>
</organism>
<organismHost>
    <name type="scientific">Equus caballus</name>
    <name type="common">Horse</name>
    <dbReference type="NCBI Taxonomy" id="9796"/>
</organismHost>
<comment type="function">
    <molecule>Outer capsid protein VP4</molecule>
    <text evidence="1">Spike-forming protein that mediates virion attachment to the host epithelial cell receptors and plays a major role in cell penetration, determination of host range restriction and virulence. Rotavirus attachment and entry into the host cell probably involves multiple sequential contacts between the outer capsid proteins VP4 and VP7, and the cell receptors. It is subsequently lost, together with VP7, following virus entry into the host cell. Following entry into the host cell, low intracellular or intravesicular Ca(2+) concentration probably causes the calcium-stabilized VP7 trimers to dissociate from the virion. This step is probably necessary for the membrane-disrupting entry step and the release of VP4, which is locked onto the virion by VP7. During the virus exit from the host cell, VP4 seems to be required to target the newly formed virions to the host cell lipid rafts.</text>
</comment>
<comment type="function">
    <molecule>Outer capsid protein VP5*</molecule>
    <text evidence="1">Forms the spike 'foot' and 'body' and acts as a membrane permeabilization protein that mediates release of viral particles from endosomal compartments into the cytoplasm. During entry, the part of VP5* that protrudes from the virus folds back on itself and reorganizes from a local dimer to a trimer. This reorganization may be linked to membrane penetration by exposing VP5* hydrophobic region. In integrin-dependent strains, VP5* targets the integrin heterodimer ITGA2/ITGB1 for cell attachment.</text>
</comment>
<comment type="function">
    <molecule>Outer capsid protein VP8*</molecule>
    <text evidence="1">Forms the head of the spikes and mediates the recognition of specific host cell surface glycans. It is the viral hemagglutinin and an important target of neutralizing antibodies. In sialic acid-dependent strains, VP8* binds to host cell sialic acid, most probably a ganglioside, providing the initial contact. In some other strains, VP8* mediates the attachment to histo-blood group antigens (HBGAs) for viral entry.</text>
</comment>
<comment type="subunit">
    <molecule>Outer capsid protein VP4</molecule>
    <text evidence="1">Homotrimer. VP4 adopts a dimeric appearance above the capsid surface, while forming a trimeric base anchored inside the capsid layer. Only hints of the third molecule are observed above the capsid surface. It probably performs a series of molecular rearrangements during viral entry. Prior to trypsin cleavage, it is flexible. The priming trypsin cleavage triggers its rearrangement into rigid spikes with approximate two-fold symmetry of their protruding parts. After an unknown second triggering event, cleaved VP4 may undergo another rearrangement, in which two VP5* subunits fold back on themselves and join a third subunit to form a tightly associated trimer, shaped like a folded umbrella. Interacts with VP6. Interacts with VP7.</text>
</comment>
<comment type="subunit">
    <molecule>Outer capsid protein VP5*</molecule>
    <text evidence="1">Homotrimer. The trimer is coiled-coil stabilized by its C-terminus, however, its N-terminus, known as antigen domain or 'body', seems to be flexible allowing it to self-associate either as a dimer or a trimer.</text>
</comment>
<comment type="subcellular location">
    <molecule>Outer capsid protein VP4</molecule>
    <subcellularLocation>
        <location evidence="1">Virion</location>
    </subcellularLocation>
    <subcellularLocation>
        <location evidence="1">Host rough endoplasmic reticulum</location>
    </subcellularLocation>
    <subcellularLocation>
        <location evidence="1">Host cell membrane</location>
    </subcellularLocation>
    <subcellularLocation>
        <location evidence="1">Host cytoplasm</location>
        <location evidence="1">Host cytoskeleton</location>
    </subcellularLocation>
    <subcellularLocation>
        <location evidence="1">Host endoplasmic reticulum-Golgi intermediate compartment</location>
    </subcellularLocation>
    <text evidence="1">The outer layer contains 180 copies of VP4, grouped as 60 dimers. Immature double-layered particles assembled in the cytoplasm bud across the membrane of the endoplasmic reticulum, acquiring during this process a transient lipid membrane that is modified with the ER resident viral glycoproteins NSP4 and VP7; these enveloped particles also contain VP4. As the particles move towards the interior of the ER cisternae, the transient lipid membrane and the non-structural protein NSP4 are lost, while the virus surface proteins VP4 and VP7 rearrange to form the outermost virus protein layer, yielding mature infectious triple-layered particles. VP4 also seems to associate with lipid rafts of the host cell membrane probably for the exit of the virus from the infected cell by an alternate pathway.</text>
</comment>
<comment type="subcellular location">
    <molecule>Outer capsid protein VP8*</molecule>
    <subcellularLocation>
        <location evidence="1">Virion</location>
    </subcellularLocation>
    <text evidence="1">Outer capsid protein.</text>
</comment>
<comment type="subcellular location">
    <molecule>Outer capsid protein VP5*</molecule>
    <subcellularLocation>
        <location evidence="1">Virion</location>
    </subcellularLocation>
    <text evidence="1">Outer capsid protein.</text>
</comment>
<comment type="domain">
    <molecule>Outer capsid protein VP4</molecule>
    <text evidence="1">The VP4 spike is divided into a foot, a stalk and body, and a head.</text>
</comment>
<comment type="PTM">
    <molecule>Outer capsid protein VP4</molecule>
    <text evidence="1">Proteolytic cleavage by trypsin results in activation of VP4 functions and greatly increases infectivity. The penetration into the host cell is dependent on trypsin treatment of VP4. It produces two peptides, VP5* and VP8* that remain associated with the virion. Cleavage of VP4 by trypsin probably occurs in vivo in the lumen of the intestine prior to infection of enterocytes. Trypsin seems to be incorporated into the three-layered viral particles but remains inactive as long as the viral outer capsid is intact and would only be activated upon the solubilization of the latter.</text>
</comment>
<comment type="miscellaneous">
    <text evidence="1">In group A rotaviruses, VP4 defines the P serotype.</text>
</comment>
<comment type="miscellaneous">
    <text evidence="1">Some rotavirus strains are neuraminidase-sensitive and require sialic acid to attach to the cell surface. Some rotavirus strains are integrin-dependent. Some rotavirus strains depend on ganglioside for their entry into the host cell. Hsp70 also seems to be involved in the entry of some strains.</text>
</comment>
<comment type="miscellaneous">
    <text evidence="1 2">This strain probably uses sialic acid to attach to the host cell.</text>
</comment>
<comment type="similarity">
    <text evidence="1">Belongs to the rotavirus VP4 family.</text>
</comment>
<evidence type="ECO:0000255" key="1">
    <source>
        <dbReference type="HAMAP-Rule" id="MF_04132"/>
    </source>
</evidence>
<evidence type="ECO:0000303" key="2">
    <source>
    </source>
</evidence>
<keyword id="KW-0167">Capsid protein</keyword>
<keyword id="KW-0175">Coiled coil</keyword>
<keyword id="KW-1015">Disulfide bond</keyword>
<keyword id="KW-0348">Hemagglutinin</keyword>
<keyword id="KW-1032">Host cell membrane</keyword>
<keyword id="KW-1035">Host cytoplasm</keyword>
<keyword id="KW-1037">Host cytoskeleton</keyword>
<keyword id="KW-1038">Host endoplasmic reticulum</keyword>
<keyword id="KW-1043">Host membrane</keyword>
<keyword id="KW-0945">Host-virus interaction</keyword>
<keyword id="KW-0472">Membrane</keyword>
<keyword id="KW-1152">Outer capsid protein</keyword>
<keyword id="KW-1161">Viral attachment to host cell</keyword>
<keyword id="KW-1162">Viral penetration into host cytoplasm</keyword>
<keyword id="KW-1173">Viral penetration via permeabilization of host membrane</keyword>
<keyword id="KW-0946">Virion</keyword>
<keyword id="KW-1160">Virus entry into host cell</keyword>
<reference key="1">
    <citation type="journal article" date="1994" name="Virology">
        <title>Species specificity and interspecies relatedness in VP4 genotypes demonstrated by VP4 sequence analysis of equine, feline, and canine rotavirus strains.</title>
        <authorList>
            <person name="Taniguchi K."/>
            <person name="Urasawa T."/>
            <person name="Urasawa S."/>
        </authorList>
    </citation>
    <scope>NUCLEOTIDE SEQUENCE [MRNA]</scope>
</reference>
<reference key="2">
    <citation type="journal article" date="2006" name="Glycoconj. J.">
        <title>Role of sialic acids in rotavirus infection.</title>
        <authorList>
            <person name="Isa P."/>
            <person name="Arias C.F."/>
            <person name="Lopez S."/>
        </authorList>
    </citation>
    <scope>REVIEW</scope>
</reference>
<protein>
    <recommendedName>
        <fullName evidence="1">Outer capsid protein VP4</fullName>
    </recommendedName>
    <alternativeName>
        <fullName evidence="1">Hemagglutinin</fullName>
    </alternativeName>
    <component>
        <recommendedName>
            <fullName evidence="1">Outer capsid protein VP8*</fullName>
        </recommendedName>
    </component>
    <component>
        <recommendedName>
            <fullName evidence="1">Outer capsid protein VP5*</fullName>
        </recommendedName>
    </component>
</protein>